<evidence type="ECO:0000255" key="1">
    <source>
        <dbReference type="HAMAP-Rule" id="MF_00421"/>
    </source>
</evidence>
<protein>
    <recommendedName>
        <fullName evidence="1">Phosphoribosylformylglycinamidine synthase subunit PurQ</fullName>
        <shortName evidence="1">FGAM synthase</shortName>
        <ecNumber evidence="1">6.3.5.3</ecNumber>
    </recommendedName>
    <alternativeName>
        <fullName evidence="1">Formylglycinamide ribonucleotide amidotransferase subunit I</fullName>
        <shortName evidence="1">FGAR amidotransferase I</shortName>
        <shortName evidence="1">FGAR-AT I</shortName>
    </alternativeName>
    <alternativeName>
        <fullName evidence="1">Glutaminase PurQ</fullName>
        <ecNumber evidence="1">3.5.1.2</ecNumber>
    </alternativeName>
    <alternativeName>
        <fullName evidence="1">Phosphoribosylformylglycinamidine synthase subunit I</fullName>
    </alternativeName>
</protein>
<organism>
    <name type="scientific">Rhodopseudomonas palustris (strain ATCC BAA-98 / CGA009)</name>
    <dbReference type="NCBI Taxonomy" id="258594"/>
    <lineage>
        <taxon>Bacteria</taxon>
        <taxon>Pseudomonadati</taxon>
        <taxon>Pseudomonadota</taxon>
        <taxon>Alphaproteobacteria</taxon>
        <taxon>Hyphomicrobiales</taxon>
        <taxon>Nitrobacteraceae</taxon>
        <taxon>Rhodopseudomonas</taxon>
    </lineage>
</organism>
<gene>
    <name evidence="1" type="primary">purQ</name>
    <name type="ordered locus">RPA3818</name>
</gene>
<feature type="chain" id="PRO_0000100581" description="Phosphoribosylformylglycinamidine synthase subunit PurQ">
    <location>
        <begin position="1"/>
        <end position="233"/>
    </location>
</feature>
<feature type="domain" description="Glutamine amidotransferase type-1" evidence="1">
    <location>
        <begin position="3"/>
        <end position="233"/>
    </location>
</feature>
<feature type="active site" description="Nucleophile" evidence="1">
    <location>
        <position position="87"/>
    </location>
</feature>
<feature type="active site" evidence="1">
    <location>
        <position position="204"/>
    </location>
</feature>
<feature type="active site" evidence="1">
    <location>
        <position position="206"/>
    </location>
</feature>
<accession>Q6N376</accession>
<reference key="1">
    <citation type="journal article" date="2004" name="Nat. Biotechnol.">
        <title>Complete genome sequence of the metabolically versatile photosynthetic bacterium Rhodopseudomonas palustris.</title>
        <authorList>
            <person name="Larimer F.W."/>
            <person name="Chain P."/>
            <person name="Hauser L."/>
            <person name="Lamerdin J.E."/>
            <person name="Malfatti S."/>
            <person name="Do L."/>
            <person name="Land M.L."/>
            <person name="Pelletier D.A."/>
            <person name="Beatty J.T."/>
            <person name="Lang A.S."/>
            <person name="Tabita F.R."/>
            <person name="Gibson J.L."/>
            <person name="Hanson T.E."/>
            <person name="Bobst C."/>
            <person name="Torres y Torres J.L."/>
            <person name="Peres C."/>
            <person name="Harrison F.H."/>
            <person name="Gibson J."/>
            <person name="Harwood C.S."/>
        </authorList>
    </citation>
    <scope>NUCLEOTIDE SEQUENCE [LARGE SCALE GENOMIC DNA]</scope>
    <source>
        <strain>ATCC BAA-98 / CGA009</strain>
    </source>
</reference>
<keyword id="KW-0067">ATP-binding</keyword>
<keyword id="KW-0963">Cytoplasm</keyword>
<keyword id="KW-0315">Glutamine amidotransferase</keyword>
<keyword id="KW-0378">Hydrolase</keyword>
<keyword id="KW-0436">Ligase</keyword>
<keyword id="KW-0547">Nucleotide-binding</keyword>
<keyword id="KW-0658">Purine biosynthesis</keyword>
<proteinExistence type="inferred from homology"/>
<sequence length="233" mass="24920">MKSAVLVFPGINRERDMARALKLVSGNDAAMVWHAETELPKGTDLVVVPGGFSYGDYLRCGAIAARAPVMDAVRKFAADGGLVLGVCNGFQILCESGLLPGVLMRNARLKFICRDVHLRVERNDTPFTQGYKAGQVIKVPVAHGEGNYEADEDTVKRLEGDGRVLYRYCSPEGEVGESHNINGAAASIAGIVSERGNVLGMMPHPENHVEDIMGCTDGRGLFAGLAQHLAKAA</sequence>
<name>PURQ_RHOPA</name>
<dbReference type="EC" id="6.3.5.3" evidence="1"/>
<dbReference type="EC" id="3.5.1.2" evidence="1"/>
<dbReference type="EMBL" id="BX572605">
    <property type="protein sequence ID" value="CAE29259.1"/>
    <property type="molecule type" value="Genomic_DNA"/>
</dbReference>
<dbReference type="RefSeq" id="WP_011159356.1">
    <property type="nucleotide sequence ID" value="NZ_CP116810.1"/>
</dbReference>
<dbReference type="SMR" id="Q6N376"/>
<dbReference type="STRING" id="258594.RPA3818"/>
<dbReference type="GeneID" id="66894925"/>
<dbReference type="eggNOG" id="COG0047">
    <property type="taxonomic scope" value="Bacteria"/>
</dbReference>
<dbReference type="HOGENOM" id="CLU_001031_3_1_5"/>
<dbReference type="PhylomeDB" id="Q6N376"/>
<dbReference type="UniPathway" id="UPA00074">
    <property type="reaction ID" value="UER00128"/>
</dbReference>
<dbReference type="GO" id="GO:0005737">
    <property type="term" value="C:cytoplasm"/>
    <property type="evidence" value="ECO:0007669"/>
    <property type="project" value="UniProtKB-SubCell"/>
</dbReference>
<dbReference type="GO" id="GO:0005524">
    <property type="term" value="F:ATP binding"/>
    <property type="evidence" value="ECO:0007669"/>
    <property type="project" value="UniProtKB-KW"/>
</dbReference>
<dbReference type="GO" id="GO:0004359">
    <property type="term" value="F:glutaminase activity"/>
    <property type="evidence" value="ECO:0007669"/>
    <property type="project" value="UniProtKB-EC"/>
</dbReference>
<dbReference type="GO" id="GO:0004642">
    <property type="term" value="F:phosphoribosylformylglycinamidine synthase activity"/>
    <property type="evidence" value="ECO:0007669"/>
    <property type="project" value="UniProtKB-UniRule"/>
</dbReference>
<dbReference type="GO" id="GO:0006189">
    <property type="term" value="P:'de novo' IMP biosynthetic process"/>
    <property type="evidence" value="ECO:0007669"/>
    <property type="project" value="UniProtKB-UniRule"/>
</dbReference>
<dbReference type="CDD" id="cd01740">
    <property type="entry name" value="GATase1_FGAR_AT"/>
    <property type="match status" value="1"/>
</dbReference>
<dbReference type="Gene3D" id="3.40.50.880">
    <property type="match status" value="1"/>
</dbReference>
<dbReference type="HAMAP" id="MF_00421">
    <property type="entry name" value="PurQ"/>
    <property type="match status" value="1"/>
</dbReference>
<dbReference type="InterPro" id="IPR029062">
    <property type="entry name" value="Class_I_gatase-like"/>
</dbReference>
<dbReference type="InterPro" id="IPR010075">
    <property type="entry name" value="PRibForGlyAmidine_synth_PurQ"/>
</dbReference>
<dbReference type="NCBIfam" id="TIGR01737">
    <property type="entry name" value="FGAM_synth_I"/>
    <property type="match status" value="1"/>
</dbReference>
<dbReference type="NCBIfam" id="NF002957">
    <property type="entry name" value="PRK03619.1"/>
    <property type="match status" value="1"/>
</dbReference>
<dbReference type="PANTHER" id="PTHR47552">
    <property type="entry name" value="PHOSPHORIBOSYLFORMYLGLYCINAMIDINE SYNTHASE SUBUNIT PURQ"/>
    <property type="match status" value="1"/>
</dbReference>
<dbReference type="PANTHER" id="PTHR47552:SF1">
    <property type="entry name" value="PHOSPHORIBOSYLFORMYLGLYCINAMIDINE SYNTHASE SUBUNIT PURQ"/>
    <property type="match status" value="1"/>
</dbReference>
<dbReference type="Pfam" id="PF13507">
    <property type="entry name" value="GATase_5"/>
    <property type="match status" value="1"/>
</dbReference>
<dbReference type="PIRSF" id="PIRSF001586">
    <property type="entry name" value="FGAM_synth_I"/>
    <property type="match status" value="1"/>
</dbReference>
<dbReference type="SMART" id="SM01211">
    <property type="entry name" value="GATase_5"/>
    <property type="match status" value="1"/>
</dbReference>
<dbReference type="SUPFAM" id="SSF52317">
    <property type="entry name" value="Class I glutamine amidotransferase-like"/>
    <property type="match status" value="1"/>
</dbReference>
<dbReference type="PROSITE" id="PS51273">
    <property type="entry name" value="GATASE_TYPE_1"/>
    <property type="match status" value="1"/>
</dbReference>
<comment type="function">
    <text evidence="1">Part of the phosphoribosylformylglycinamidine synthase complex involved in the purines biosynthetic pathway. Catalyzes the ATP-dependent conversion of formylglycinamide ribonucleotide (FGAR) and glutamine to yield formylglycinamidine ribonucleotide (FGAM) and glutamate. The FGAM synthase complex is composed of three subunits. PurQ produces an ammonia molecule by converting glutamine to glutamate. PurL transfers the ammonia molecule to FGAR to form FGAM in an ATP-dependent manner. PurS interacts with PurQ and PurL and is thought to assist in the transfer of the ammonia molecule from PurQ to PurL.</text>
</comment>
<comment type="catalytic activity">
    <reaction evidence="1">
        <text>N(2)-formyl-N(1)-(5-phospho-beta-D-ribosyl)glycinamide + L-glutamine + ATP + H2O = 2-formamido-N(1)-(5-O-phospho-beta-D-ribosyl)acetamidine + L-glutamate + ADP + phosphate + H(+)</text>
        <dbReference type="Rhea" id="RHEA:17129"/>
        <dbReference type="ChEBI" id="CHEBI:15377"/>
        <dbReference type="ChEBI" id="CHEBI:15378"/>
        <dbReference type="ChEBI" id="CHEBI:29985"/>
        <dbReference type="ChEBI" id="CHEBI:30616"/>
        <dbReference type="ChEBI" id="CHEBI:43474"/>
        <dbReference type="ChEBI" id="CHEBI:58359"/>
        <dbReference type="ChEBI" id="CHEBI:147286"/>
        <dbReference type="ChEBI" id="CHEBI:147287"/>
        <dbReference type="ChEBI" id="CHEBI:456216"/>
        <dbReference type="EC" id="6.3.5.3"/>
    </reaction>
</comment>
<comment type="catalytic activity">
    <reaction evidence="1">
        <text>L-glutamine + H2O = L-glutamate + NH4(+)</text>
        <dbReference type="Rhea" id="RHEA:15889"/>
        <dbReference type="ChEBI" id="CHEBI:15377"/>
        <dbReference type="ChEBI" id="CHEBI:28938"/>
        <dbReference type="ChEBI" id="CHEBI:29985"/>
        <dbReference type="ChEBI" id="CHEBI:58359"/>
        <dbReference type="EC" id="3.5.1.2"/>
    </reaction>
</comment>
<comment type="pathway">
    <text evidence="1">Purine metabolism; IMP biosynthesis via de novo pathway; 5-amino-1-(5-phospho-D-ribosyl)imidazole from N(2)-formyl-N(1)-(5-phospho-D-ribosyl)glycinamide: step 1/2.</text>
</comment>
<comment type="subunit">
    <text evidence="1">Part of the FGAM synthase complex composed of 1 PurL, 1 PurQ and 2 PurS subunits.</text>
</comment>
<comment type="subcellular location">
    <subcellularLocation>
        <location evidence="1">Cytoplasm</location>
    </subcellularLocation>
</comment>